<protein>
    <recommendedName>
        <fullName evidence="1">Uracil-DNA glycosylase</fullName>
        <shortName evidence="1">UDG</shortName>
        <ecNumber evidence="1">3.2.2.27</ecNumber>
    </recommendedName>
</protein>
<sequence length="224" mass="25373">MNTSWNDILETEKEKPYYQEMMTYINEARSQGKKIFPKEEDVFTAFSLTPFNNVTVVILGQDPYHGEGQAHGLSFSVLPGVKIPPSLRNMYKELAEDIEGFIPPTHGYLESWAEQGVLLLNTVLTVEESQAHSHAKLGWETFTDSIIEQLNEKKEGIIFLLWGAHAQKKGINIDAMKHSILVAPHPSPLSARRGFFGCQHFSKTNELLREKNLSEINWSSITLD</sequence>
<accession>B6EKY3</accession>
<dbReference type="EC" id="3.2.2.27" evidence="1"/>
<dbReference type="EMBL" id="FM178379">
    <property type="protein sequence ID" value="CAQ80235.1"/>
    <property type="molecule type" value="Genomic_DNA"/>
</dbReference>
<dbReference type="RefSeq" id="WP_012551022.1">
    <property type="nucleotide sequence ID" value="NC_011312.1"/>
</dbReference>
<dbReference type="SMR" id="B6EKY3"/>
<dbReference type="KEGG" id="vsa:VSAL_I2551"/>
<dbReference type="eggNOG" id="COG0692">
    <property type="taxonomic scope" value="Bacteria"/>
</dbReference>
<dbReference type="HOGENOM" id="CLU_032162_3_0_6"/>
<dbReference type="Proteomes" id="UP000001730">
    <property type="component" value="Chromosome 1"/>
</dbReference>
<dbReference type="GO" id="GO:0005737">
    <property type="term" value="C:cytoplasm"/>
    <property type="evidence" value="ECO:0007669"/>
    <property type="project" value="UniProtKB-SubCell"/>
</dbReference>
<dbReference type="GO" id="GO:0004844">
    <property type="term" value="F:uracil DNA N-glycosylase activity"/>
    <property type="evidence" value="ECO:0007669"/>
    <property type="project" value="UniProtKB-UniRule"/>
</dbReference>
<dbReference type="GO" id="GO:0097510">
    <property type="term" value="P:base-excision repair, AP site formation via deaminated base removal"/>
    <property type="evidence" value="ECO:0007669"/>
    <property type="project" value="TreeGrafter"/>
</dbReference>
<dbReference type="CDD" id="cd10027">
    <property type="entry name" value="UDG-F1-like"/>
    <property type="match status" value="1"/>
</dbReference>
<dbReference type="FunFam" id="3.40.470.10:FF:000001">
    <property type="entry name" value="Uracil-DNA glycosylase"/>
    <property type="match status" value="1"/>
</dbReference>
<dbReference type="Gene3D" id="3.40.470.10">
    <property type="entry name" value="Uracil-DNA glycosylase-like domain"/>
    <property type="match status" value="1"/>
</dbReference>
<dbReference type="HAMAP" id="MF_00148">
    <property type="entry name" value="UDG"/>
    <property type="match status" value="1"/>
</dbReference>
<dbReference type="InterPro" id="IPR002043">
    <property type="entry name" value="UDG_fam1"/>
</dbReference>
<dbReference type="InterPro" id="IPR005122">
    <property type="entry name" value="Uracil-DNA_glycosylase-like"/>
</dbReference>
<dbReference type="InterPro" id="IPR036895">
    <property type="entry name" value="Uracil-DNA_glycosylase-like_sf"/>
</dbReference>
<dbReference type="NCBIfam" id="NF003588">
    <property type="entry name" value="PRK05254.1-1"/>
    <property type="match status" value="1"/>
</dbReference>
<dbReference type="NCBIfam" id="NF003589">
    <property type="entry name" value="PRK05254.1-2"/>
    <property type="match status" value="1"/>
</dbReference>
<dbReference type="NCBIfam" id="NF003591">
    <property type="entry name" value="PRK05254.1-4"/>
    <property type="match status" value="1"/>
</dbReference>
<dbReference type="NCBIfam" id="NF003592">
    <property type="entry name" value="PRK05254.1-5"/>
    <property type="match status" value="1"/>
</dbReference>
<dbReference type="NCBIfam" id="TIGR00628">
    <property type="entry name" value="ung"/>
    <property type="match status" value="1"/>
</dbReference>
<dbReference type="PANTHER" id="PTHR11264">
    <property type="entry name" value="URACIL-DNA GLYCOSYLASE"/>
    <property type="match status" value="1"/>
</dbReference>
<dbReference type="PANTHER" id="PTHR11264:SF0">
    <property type="entry name" value="URACIL-DNA GLYCOSYLASE"/>
    <property type="match status" value="1"/>
</dbReference>
<dbReference type="Pfam" id="PF03167">
    <property type="entry name" value="UDG"/>
    <property type="match status" value="1"/>
</dbReference>
<dbReference type="SMART" id="SM00986">
    <property type="entry name" value="UDG"/>
    <property type="match status" value="1"/>
</dbReference>
<dbReference type="SMART" id="SM00987">
    <property type="entry name" value="UreE_C"/>
    <property type="match status" value="1"/>
</dbReference>
<dbReference type="SUPFAM" id="SSF52141">
    <property type="entry name" value="Uracil-DNA glycosylase-like"/>
    <property type="match status" value="1"/>
</dbReference>
<proteinExistence type="inferred from homology"/>
<comment type="function">
    <text evidence="1">Excises uracil residues from the DNA which can arise as a result of misincorporation of dUMP residues by DNA polymerase or due to deamination of cytosine.</text>
</comment>
<comment type="catalytic activity">
    <reaction evidence="1">
        <text>Hydrolyzes single-stranded DNA or mismatched double-stranded DNA and polynucleotides, releasing free uracil.</text>
        <dbReference type="EC" id="3.2.2.27"/>
    </reaction>
</comment>
<comment type="subcellular location">
    <subcellularLocation>
        <location evidence="1">Cytoplasm</location>
    </subcellularLocation>
</comment>
<comment type="similarity">
    <text evidence="1">Belongs to the uracil-DNA glycosylase (UDG) superfamily. UNG family.</text>
</comment>
<feature type="chain" id="PRO_1000199760" description="Uracil-DNA glycosylase">
    <location>
        <begin position="1"/>
        <end position="224"/>
    </location>
</feature>
<feature type="active site" description="Proton acceptor" evidence="1">
    <location>
        <position position="62"/>
    </location>
</feature>
<name>UNG_ALISL</name>
<organism>
    <name type="scientific">Aliivibrio salmonicida (strain LFI1238)</name>
    <name type="common">Vibrio salmonicida (strain LFI1238)</name>
    <dbReference type="NCBI Taxonomy" id="316275"/>
    <lineage>
        <taxon>Bacteria</taxon>
        <taxon>Pseudomonadati</taxon>
        <taxon>Pseudomonadota</taxon>
        <taxon>Gammaproteobacteria</taxon>
        <taxon>Vibrionales</taxon>
        <taxon>Vibrionaceae</taxon>
        <taxon>Aliivibrio</taxon>
    </lineage>
</organism>
<reference key="1">
    <citation type="journal article" date="2008" name="BMC Genomics">
        <title>The genome sequence of the fish pathogen Aliivibrio salmonicida strain LFI1238 shows extensive evidence of gene decay.</title>
        <authorList>
            <person name="Hjerde E."/>
            <person name="Lorentzen M.S."/>
            <person name="Holden M.T."/>
            <person name="Seeger K."/>
            <person name="Paulsen S."/>
            <person name="Bason N."/>
            <person name="Churcher C."/>
            <person name="Harris D."/>
            <person name="Norbertczak H."/>
            <person name="Quail M.A."/>
            <person name="Sanders S."/>
            <person name="Thurston S."/>
            <person name="Parkhill J."/>
            <person name="Willassen N.P."/>
            <person name="Thomson N.R."/>
        </authorList>
    </citation>
    <scope>NUCLEOTIDE SEQUENCE [LARGE SCALE GENOMIC DNA]</scope>
    <source>
        <strain>LFI1238</strain>
    </source>
</reference>
<gene>
    <name evidence="1" type="primary">ung</name>
    <name type="ordered locus">VSAL_I2551</name>
</gene>
<evidence type="ECO:0000255" key="1">
    <source>
        <dbReference type="HAMAP-Rule" id="MF_00148"/>
    </source>
</evidence>
<keyword id="KW-0963">Cytoplasm</keyword>
<keyword id="KW-0227">DNA damage</keyword>
<keyword id="KW-0234">DNA repair</keyword>
<keyword id="KW-0378">Hydrolase</keyword>